<comment type="sequence caution" evidence="2">
    <conflict type="erroneous initiation">
        <sequence resource="EMBL-CDS" id="CAB89229"/>
    </conflict>
</comment>
<evidence type="ECO:0000255" key="1">
    <source>
        <dbReference type="PROSITE-ProRule" id="PRU00080"/>
    </source>
</evidence>
<evidence type="ECO:0000305" key="2"/>
<organism>
    <name type="scientific">Arabidopsis thaliana</name>
    <name type="common">Mouse-ear cress</name>
    <dbReference type="NCBI Taxonomy" id="3702"/>
    <lineage>
        <taxon>Eukaryota</taxon>
        <taxon>Viridiplantae</taxon>
        <taxon>Streptophyta</taxon>
        <taxon>Embryophyta</taxon>
        <taxon>Tracheophyta</taxon>
        <taxon>Spermatophyta</taxon>
        <taxon>Magnoliopsida</taxon>
        <taxon>eudicotyledons</taxon>
        <taxon>Gunneridae</taxon>
        <taxon>Pentapetalae</taxon>
        <taxon>rosids</taxon>
        <taxon>malvids</taxon>
        <taxon>Brassicales</taxon>
        <taxon>Brassicaceae</taxon>
        <taxon>Camelineae</taxon>
        <taxon>Arabidopsis</taxon>
    </lineage>
</organism>
<keyword id="KW-0433">Leucine-rich repeat</keyword>
<keyword id="KW-1185">Reference proteome</keyword>
<keyword id="KW-0677">Repeat</keyword>
<gene>
    <name type="ordered locus">At3g52680</name>
    <name type="ORF">F3C22.80</name>
</gene>
<feature type="chain" id="PRO_0000283114" description="F-box/FBD/LRR-repeat protein At3g52680">
    <location>
        <begin position="1"/>
        <end position="456"/>
    </location>
</feature>
<feature type="domain" description="F-box" evidence="1">
    <location>
        <begin position="20"/>
        <end position="73"/>
    </location>
</feature>
<feature type="repeat" description="LRR 1">
    <location>
        <begin position="74"/>
        <end position="100"/>
    </location>
</feature>
<feature type="repeat" description="LRR 2">
    <location>
        <begin position="102"/>
        <end position="127"/>
    </location>
</feature>
<feature type="repeat" description="LRR 3">
    <location>
        <begin position="152"/>
        <end position="179"/>
    </location>
</feature>
<feature type="repeat" description="LRR 4">
    <location>
        <begin position="180"/>
        <end position="205"/>
    </location>
</feature>
<feature type="repeat" description="LRR 5">
    <location>
        <begin position="225"/>
        <end position="252"/>
    </location>
</feature>
<feature type="repeat" description="LRR 6">
    <location>
        <begin position="270"/>
        <end position="295"/>
    </location>
</feature>
<feature type="repeat" description="LRR 7">
    <location>
        <begin position="318"/>
        <end position="344"/>
    </location>
</feature>
<feature type="domain" description="FBD">
    <location>
        <begin position="358"/>
        <end position="409"/>
    </location>
</feature>
<protein>
    <recommendedName>
        <fullName>F-box/FBD/LRR-repeat protein At3g52680</fullName>
    </recommendedName>
</protein>
<sequence length="456" mass="52255">MISPTMEQGESLRIRVVMGKDRISELPDGLLLKILSSLPTNIVVATSVLSKQWRSLWKLVPNLEFDSDDYESEHYTFSEIVCKSFLSHKAPVLESFRLKFVNFNPVDIGLWVGIAFSRHLRELVLDFYPAELGKGVTFTFPSSLCTCNTLETLKLVLCILVDIPSPVLMKSLRTLHLEFVRYKDESSVRNLLSGCPGLEELRLYRGDDSDIKVFTIEVPSLQRLTIHDNNDGPEFWGYVINAPFLKYLLIEELRCPEFCLNAPELVEANIAEVTSITIEKFLGSFTSVSRLLLNLSPLKITYPTGSMFYQLVSLEMYTREAEWWNLLTLMLENSPKLQVLKLTDRSQNFHKDGLVSGKWNEPKDVPECLLSQLETFVWRRFDWGREEEKEIATYILKNGRRLKKATFSTNPIESEELNKLKERRKVLNGLDGVVRASNSCQLVFKFDPSYLGSDSP</sequence>
<proteinExistence type="evidence at transcript level"/>
<reference key="1">
    <citation type="journal article" date="2000" name="Nature">
        <title>Sequence and analysis of chromosome 3 of the plant Arabidopsis thaliana.</title>
        <authorList>
            <person name="Salanoubat M."/>
            <person name="Lemcke K."/>
            <person name="Rieger M."/>
            <person name="Ansorge W."/>
            <person name="Unseld M."/>
            <person name="Fartmann B."/>
            <person name="Valle G."/>
            <person name="Bloecker H."/>
            <person name="Perez-Alonso M."/>
            <person name="Obermaier B."/>
            <person name="Delseny M."/>
            <person name="Boutry M."/>
            <person name="Grivell L.A."/>
            <person name="Mache R."/>
            <person name="Puigdomenech P."/>
            <person name="De Simone V."/>
            <person name="Choisne N."/>
            <person name="Artiguenave F."/>
            <person name="Robert C."/>
            <person name="Brottier P."/>
            <person name="Wincker P."/>
            <person name="Cattolico L."/>
            <person name="Weissenbach J."/>
            <person name="Saurin W."/>
            <person name="Quetier F."/>
            <person name="Schaefer M."/>
            <person name="Mueller-Auer S."/>
            <person name="Gabel C."/>
            <person name="Fuchs M."/>
            <person name="Benes V."/>
            <person name="Wurmbach E."/>
            <person name="Drzonek H."/>
            <person name="Erfle H."/>
            <person name="Jordan N."/>
            <person name="Bangert S."/>
            <person name="Wiedelmann R."/>
            <person name="Kranz H."/>
            <person name="Voss H."/>
            <person name="Holland R."/>
            <person name="Brandt P."/>
            <person name="Nyakatura G."/>
            <person name="Vezzi A."/>
            <person name="D'Angelo M."/>
            <person name="Pallavicini A."/>
            <person name="Toppo S."/>
            <person name="Simionati B."/>
            <person name="Conrad A."/>
            <person name="Hornischer K."/>
            <person name="Kauer G."/>
            <person name="Loehnert T.-H."/>
            <person name="Nordsiek G."/>
            <person name="Reichelt J."/>
            <person name="Scharfe M."/>
            <person name="Schoen O."/>
            <person name="Bargues M."/>
            <person name="Terol J."/>
            <person name="Climent J."/>
            <person name="Navarro P."/>
            <person name="Collado C."/>
            <person name="Perez-Perez A."/>
            <person name="Ottenwaelder B."/>
            <person name="Duchemin D."/>
            <person name="Cooke R."/>
            <person name="Laudie M."/>
            <person name="Berger-Llauro C."/>
            <person name="Purnelle B."/>
            <person name="Masuy D."/>
            <person name="de Haan M."/>
            <person name="Maarse A.C."/>
            <person name="Alcaraz J.-P."/>
            <person name="Cottet A."/>
            <person name="Casacuberta E."/>
            <person name="Monfort A."/>
            <person name="Argiriou A."/>
            <person name="Flores M."/>
            <person name="Liguori R."/>
            <person name="Vitale D."/>
            <person name="Mannhaupt G."/>
            <person name="Haase D."/>
            <person name="Schoof H."/>
            <person name="Rudd S."/>
            <person name="Zaccaria P."/>
            <person name="Mewes H.-W."/>
            <person name="Mayer K.F.X."/>
            <person name="Kaul S."/>
            <person name="Town C.D."/>
            <person name="Koo H.L."/>
            <person name="Tallon L.J."/>
            <person name="Jenkins J."/>
            <person name="Rooney T."/>
            <person name="Rizzo M."/>
            <person name="Walts A."/>
            <person name="Utterback T."/>
            <person name="Fujii C.Y."/>
            <person name="Shea T.P."/>
            <person name="Creasy T.H."/>
            <person name="Haas B."/>
            <person name="Maiti R."/>
            <person name="Wu D."/>
            <person name="Peterson J."/>
            <person name="Van Aken S."/>
            <person name="Pai G."/>
            <person name="Militscher J."/>
            <person name="Sellers P."/>
            <person name="Gill J.E."/>
            <person name="Feldblyum T.V."/>
            <person name="Preuss D."/>
            <person name="Lin X."/>
            <person name="Nierman W.C."/>
            <person name="Salzberg S.L."/>
            <person name="White O."/>
            <person name="Venter J.C."/>
            <person name="Fraser C.M."/>
            <person name="Kaneko T."/>
            <person name="Nakamura Y."/>
            <person name="Sato S."/>
            <person name="Kato T."/>
            <person name="Asamizu E."/>
            <person name="Sasamoto S."/>
            <person name="Kimura T."/>
            <person name="Idesawa K."/>
            <person name="Kawashima K."/>
            <person name="Kishida Y."/>
            <person name="Kiyokawa C."/>
            <person name="Kohara M."/>
            <person name="Matsumoto M."/>
            <person name="Matsuno A."/>
            <person name="Muraki A."/>
            <person name="Nakayama S."/>
            <person name="Nakazaki N."/>
            <person name="Shinpo S."/>
            <person name="Takeuchi C."/>
            <person name="Wada T."/>
            <person name="Watanabe A."/>
            <person name="Yamada M."/>
            <person name="Yasuda M."/>
            <person name="Tabata S."/>
        </authorList>
    </citation>
    <scope>NUCLEOTIDE SEQUENCE [LARGE SCALE GENOMIC DNA]</scope>
    <source>
        <strain>cv. Columbia</strain>
    </source>
</reference>
<reference key="2">
    <citation type="journal article" date="2017" name="Plant J.">
        <title>Araport11: a complete reannotation of the Arabidopsis thaliana reference genome.</title>
        <authorList>
            <person name="Cheng C.Y."/>
            <person name="Krishnakumar V."/>
            <person name="Chan A.P."/>
            <person name="Thibaud-Nissen F."/>
            <person name="Schobel S."/>
            <person name="Town C.D."/>
        </authorList>
    </citation>
    <scope>GENOME REANNOTATION</scope>
    <source>
        <strain>cv. Columbia</strain>
    </source>
</reference>
<reference key="3">
    <citation type="submission" date="2006-09" db="EMBL/GenBank/DDBJ databases">
        <title>Arabidopsis ORF clones.</title>
        <authorList>
            <person name="Kim C.J."/>
            <person name="Chen H."/>
            <person name="Quinitio C."/>
            <person name="Shinn P."/>
            <person name="Ecker J.R."/>
        </authorList>
    </citation>
    <scope>NUCLEOTIDE SEQUENCE [LARGE SCALE MRNA]</scope>
    <source>
        <strain>cv. Columbia</strain>
    </source>
</reference>
<accession>Q9LXJ6</accession>
<accession>Q08AA0</accession>
<dbReference type="EMBL" id="AL353912">
    <property type="protein sequence ID" value="CAB89229.1"/>
    <property type="status" value="ALT_INIT"/>
    <property type="molecule type" value="Genomic_DNA"/>
</dbReference>
<dbReference type="EMBL" id="CP002686">
    <property type="protein sequence ID" value="AEE78979.1"/>
    <property type="molecule type" value="Genomic_DNA"/>
</dbReference>
<dbReference type="EMBL" id="BT028979">
    <property type="protein sequence ID" value="ABI93888.1"/>
    <property type="molecule type" value="mRNA"/>
</dbReference>
<dbReference type="PIR" id="T49021">
    <property type="entry name" value="T49021"/>
</dbReference>
<dbReference type="RefSeq" id="NP_190836.2">
    <property type="nucleotide sequence ID" value="NM_115128.4"/>
</dbReference>
<dbReference type="FunCoup" id="Q9LXJ6">
    <property type="interactions" value="869"/>
</dbReference>
<dbReference type="iPTMnet" id="Q9LXJ6"/>
<dbReference type="PaxDb" id="3702-AT3G52680.2"/>
<dbReference type="EnsemblPlants" id="AT3G52680.1">
    <property type="protein sequence ID" value="AT3G52680.1"/>
    <property type="gene ID" value="AT3G52680"/>
</dbReference>
<dbReference type="GeneID" id="824434"/>
<dbReference type="Gramene" id="AT3G52680.1">
    <property type="protein sequence ID" value="AT3G52680.1"/>
    <property type="gene ID" value="AT3G52680"/>
</dbReference>
<dbReference type="KEGG" id="ath:AT3G52680"/>
<dbReference type="Araport" id="AT3G52680"/>
<dbReference type="TAIR" id="AT3G52680"/>
<dbReference type="HOGENOM" id="CLU_010721_1_2_1"/>
<dbReference type="InParanoid" id="Q9LXJ6"/>
<dbReference type="OMA" id="WIVNETI"/>
<dbReference type="PhylomeDB" id="Q9LXJ6"/>
<dbReference type="PRO" id="PR:Q9LXJ6"/>
<dbReference type="Proteomes" id="UP000006548">
    <property type="component" value="Chromosome 3"/>
</dbReference>
<dbReference type="ExpressionAtlas" id="Q9LXJ6">
    <property type="expression patterns" value="baseline and differential"/>
</dbReference>
<dbReference type="CDD" id="cd22160">
    <property type="entry name" value="F-box_AtFBL13-like"/>
    <property type="match status" value="1"/>
</dbReference>
<dbReference type="Gene3D" id="1.20.1280.50">
    <property type="match status" value="1"/>
</dbReference>
<dbReference type="Gene3D" id="3.80.10.10">
    <property type="entry name" value="Ribonuclease Inhibitor"/>
    <property type="match status" value="1"/>
</dbReference>
<dbReference type="InterPro" id="IPR036047">
    <property type="entry name" value="F-box-like_dom_sf"/>
</dbReference>
<dbReference type="InterPro" id="IPR053781">
    <property type="entry name" value="F-box_AtFBL13-like"/>
</dbReference>
<dbReference type="InterPro" id="IPR001810">
    <property type="entry name" value="F-box_dom"/>
</dbReference>
<dbReference type="InterPro" id="IPR006566">
    <property type="entry name" value="FBD"/>
</dbReference>
<dbReference type="InterPro" id="IPR050232">
    <property type="entry name" value="FBL13/AtMIF1-like"/>
</dbReference>
<dbReference type="InterPro" id="IPR032675">
    <property type="entry name" value="LRR_dom_sf"/>
</dbReference>
<dbReference type="InterPro" id="IPR055411">
    <property type="entry name" value="LRR_FXL15/At3g58940/PEG3-like"/>
</dbReference>
<dbReference type="PANTHER" id="PTHR31900:SF34">
    <property type="entry name" value="EMB|CAB62440.1-RELATED"/>
    <property type="match status" value="1"/>
</dbReference>
<dbReference type="PANTHER" id="PTHR31900">
    <property type="entry name" value="F-BOX/RNI SUPERFAMILY PROTEIN-RELATED"/>
    <property type="match status" value="1"/>
</dbReference>
<dbReference type="Pfam" id="PF00646">
    <property type="entry name" value="F-box"/>
    <property type="match status" value="1"/>
</dbReference>
<dbReference type="Pfam" id="PF08387">
    <property type="entry name" value="FBD"/>
    <property type="match status" value="1"/>
</dbReference>
<dbReference type="Pfam" id="PF24758">
    <property type="entry name" value="LRR_At5g56370"/>
    <property type="match status" value="1"/>
</dbReference>
<dbReference type="SMART" id="SM00579">
    <property type="entry name" value="FBD"/>
    <property type="match status" value="1"/>
</dbReference>
<dbReference type="SUPFAM" id="SSF81383">
    <property type="entry name" value="F-box domain"/>
    <property type="match status" value="1"/>
</dbReference>
<dbReference type="SUPFAM" id="SSF52047">
    <property type="entry name" value="RNI-like"/>
    <property type="match status" value="1"/>
</dbReference>
<dbReference type="PROSITE" id="PS50181">
    <property type="entry name" value="FBOX"/>
    <property type="match status" value="1"/>
</dbReference>
<name>FDL21_ARATH</name>